<feature type="chain" id="PRO_0000351596" description="Autoinducer-2 kinase">
    <location>
        <begin position="1"/>
        <end position="530"/>
    </location>
</feature>
<reference key="1">
    <citation type="journal article" date="2004" name="Nat. Genet.">
        <title>Comparison of genome degradation in Paratyphi A and Typhi, human-restricted serovars of Salmonella enterica that cause typhoid.</title>
        <authorList>
            <person name="McClelland M."/>
            <person name="Sanderson K.E."/>
            <person name="Clifton S.W."/>
            <person name="Latreille P."/>
            <person name="Porwollik S."/>
            <person name="Sabo A."/>
            <person name="Meyer R."/>
            <person name="Bieri T."/>
            <person name="Ozersky P."/>
            <person name="McLellan M."/>
            <person name="Harkins C.R."/>
            <person name="Wang C."/>
            <person name="Nguyen C."/>
            <person name="Berghoff A."/>
            <person name="Elliott G."/>
            <person name="Kohlberg S."/>
            <person name="Strong C."/>
            <person name="Du F."/>
            <person name="Carter J."/>
            <person name="Kremizki C."/>
            <person name="Layman D."/>
            <person name="Leonard S."/>
            <person name="Sun H."/>
            <person name="Fulton L."/>
            <person name="Nash W."/>
            <person name="Miner T."/>
            <person name="Minx P."/>
            <person name="Delehaunty K."/>
            <person name="Fronick C."/>
            <person name="Magrini V."/>
            <person name="Nhan M."/>
            <person name="Warren W."/>
            <person name="Florea L."/>
            <person name="Spieth J."/>
            <person name="Wilson R.K."/>
        </authorList>
    </citation>
    <scope>NUCLEOTIDE SEQUENCE [LARGE SCALE GENOMIC DNA]</scope>
    <source>
        <strain>ATCC 9150 / SARB42</strain>
    </source>
</reference>
<gene>
    <name evidence="1" type="primary">lsrK</name>
    <name type="ordered locus">SPA3915</name>
</gene>
<sequence length="530" mass="57446">MARLCTHTESGHYLMALDAGTGSVRAVIFDLQGKQIAVDQAEWQHLAVPDVPGSMEFDLAKNWQLACQCIRQALQKAAIPATAIAAVSACSMREGIVIYDSNGEPIWACANVDARAAHEVSELKELHDNTFEEEVYRCSGQTLALSAIPRLLWLAHHRPDIYHRASTVTMISDWMAFMLSGELAVDPSNAGTTGLLDLVTRNWKRSLLQMAGLRSDILSPVKETGTLLGHISQKAAEQCDLQAGTPVIVGGGDVQLGCLGLGVVRPAQTAVLGGTFWQQVVNLPAPVTDPNMNVRINPHVIPGMVQTESISFFTGLTMRWFRDAFCAEEKLIAERLGIDAYSLLEDMASRVPPGAHGVMPIFSDVMRFKRWYHAAPSFINLSIDPEKCNKATLFRALEENAAIVSACNLQQIAAFSGVQADSLVFAGGGSKGKLWSQILADVTGLTVHVPVVKEATALGCAIAAGVGVGVWPSLAETGEKLVRWDREHKPNPENFAVYQQAREKWQAVYQDQRALVDGGLTTSLWKAPGL</sequence>
<evidence type="ECO:0000255" key="1">
    <source>
        <dbReference type="HAMAP-Rule" id="MF_02053"/>
    </source>
</evidence>
<proteinExistence type="inferred from homology"/>
<name>LSRK_SALPA</name>
<dbReference type="EC" id="2.7.1.189" evidence="1"/>
<dbReference type="EMBL" id="CP000026">
    <property type="protein sequence ID" value="AAV79680.1"/>
    <property type="molecule type" value="Genomic_DNA"/>
</dbReference>
<dbReference type="RefSeq" id="WP_000113079.1">
    <property type="nucleotide sequence ID" value="NC_006511.1"/>
</dbReference>
<dbReference type="SMR" id="Q5PJE9"/>
<dbReference type="KEGG" id="spt:SPA3915"/>
<dbReference type="HOGENOM" id="CLU_009281_3_4_6"/>
<dbReference type="Proteomes" id="UP000008185">
    <property type="component" value="Chromosome"/>
</dbReference>
<dbReference type="GO" id="GO:0005737">
    <property type="term" value="C:cytoplasm"/>
    <property type="evidence" value="ECO:0007669"/>
    <property type="project" value="UniProtKB-SubCell"/>
</dbReference>
<dbReference type="GO" id="GO:0071518">
    <property type="term" value="F:autoinducer-2 kinase activity"/>
    <property type="evidence" value="ECO:0007669"/>
    <property type="project" value="UniProtKB-UniRule"/>
</dbReference>
<dbReference type="GO" id="GO:0005975">
    <property type="term" value="P:carbohydrate metabolic process"/>
    <property type="evidence" value="ECO:0007669"/>
    <property type="project" value="InterPro"/>
</dbReference>
<dbReference type="GO" id="GO:0009372">
    <property type="term" value="P:quorum sensing"/>
    <property type="evidence" value="ECO:0007669"/>
    <property type="project" value="InterPro"/>
</dbReference>
<dbReference type="CDD" id="cd07775">
    <property type="entry name" value="ASKHA_NBD_FGGY_AI-2K"/>
    <property type="match status" value="1"/>
</dbReference>
<dbReference type="Gene3D" id="3.30.420.40">
    <property type="match status" value="2"/>
</dbReference>
<dbReference type="HAMAP" id="MF_02053">
    <property type="entry name" value="LsrK"/>
    <property type="match status" value="1"/>
</dbReference>
<dbReference type="InterPro" id="IPR033676">
    <property type="entry name" value="AI-2_kinase"/>
</dbReference>
<dbReference type="InterPro" id="IPR043129">
    <property type="entry name" value="ATPase_NBD"/>
</dbReference>
<dbReference type="InterPro" id="IPR000577">
    <property type="entry name" value="Carb_kinase_FGGY"/>
</dbReference>
<dbReference type="InterPro" id="IPR018485">
    <property type="entry name" value="FGGY_C"/>
</dbReference>
<dbReference type="InterPro" id="IPR050406">
    <property type="entry name" value="FGGY_Carb_Kinase"/>
</dbReference>
<dbReference type="InterPro" id="IPR018484">
    <property type="entry name" value="FGGY_N"/>
</dbReference>
<dbReference type="NCBIfam" id="NF008187">
    <property type="entry name" value="PRK10939.1"/>
    <property type="match status" value="1"/>
</dbReference>
<dbReference type="PANTHER" id="PTHR43095:SF1">
    <property type="entry name" value="AUTOINDUCER-2 KINASE"/>
    <property type="match status" value="1"/>
</dbReference>
<dbReference type="PANTHER" id="PTHR43095">
    <property type="entry name" value="SUGAR KINASE"/>
    <property type="match status" value="1"/>
</dbReference>
<dbReference type="Pfam" id="PF02782">
    <property type="entry name" value="FGGY_C"/>
    <property type="match status" value="1"/>
</dbReference>
<dbReference type="Pfam" id="PF00370">
    <property type="entry name" value="FGGY_N"/>
    <property type="match status" value="1"/>
</dbReference>
<dbReference type="PIRSF" id="PIRSF000538">
    <property type="entry name" value="GlpK"/>
    <property type="match status" value="1"/>
</dbReference>
<dbReference type="SUPFAM" id="SSF53067">
    <property type="entry name" value="Actin-like ATPase domain"/>
    <property type="match status" value="2"/>
</dbReference>
<keyword id="KW-0963">Cytoplasm</keyword>
<keyword id="KW-0418">Kinase</keyword>
<keyword id="KW-0808">Transferase</keyword>
<organism>
    <name type="scientific">Salmonella paratyphi A (strain ATCC 9150 / SARB42)</name>
    <dbReference type="NCBI Taxonomy" id="295319"/>
    <lineage>
        <taxon>Bacteria</taxon>
        <taxon>Pseudomonadati</taxon>
        <taxon>Pseudomonadota</taxon>
        <taxon>Gammaproteobacteria</taxon>
        <taxon>Enterobacterales</taxon>
        <taxon>Enterobacteriaceae</taxon>
        <taxon>Salmonella</taxon>
    </lineage>
</organism>
<comment type="function">
    <text evidence="1">Catalyzes the phosphorylation of autoinducer-2 (AI-2) to phospho-AI-2, which subsequently inactivates the transcriptional regulator LsrR and leads to the transcription of the lsr operon. Phosphorylates the ring-open form of (S)-4,5-dihydroxypentane-2,3-dione (DPD), which is the precursor to all AI-2 signaling molecules, at the C5 position.</text>
</comment>
<comment type="catalytic activity">
    <reaction evidence="1">
        <text>(S)-4,5-dihydroxypentane-2,3-dione + ATP = (2S)-2-hydroxy-3,4-dioxopentyl phosphate + ADP + H(+)</text>
        <dbReference type="Rhea" id="RHEA:15377"/>
        <dbReference type="ChEBI" id="CHEBI:15378"/>
        <dbReference type="ChEBI" id="CHEBI:29484"/>
        <dbReference type="ChEBI" id="CHEBI:30616"/>
        <dbReference type="ChEBI" id="CHEBI:71677"/>
        <dbReference type="ChEBI" id="CHEBI:456216"/>
        <dbReference type="EC" id="2.7.1.189"/>
    </reaction>
</comment>
<comment type="subcellular location">
    <subcellularLocation>
        <location evidence="1">Cytoplasm</location>
    </subcellularLocation>
</comment>
<comment type="similarity">
    <text evidence="1">Belongs to the FGGY kinase family.</text>
</comment>
<accession>Q5PJE9</accession>
<protein>
    <recommendedName>
        <fullName evidence="1">Autoinducer-2 kinase</fullName>
        <shortName evidence="1">AI-2 kinase</shortName>
        <ecNumber evidence="1">2.7.1.189</ecNumber>
    </recommendedName>
</protein>